<organism>
    <name type="scientific">Escherichia coli (strain SE11)</name>
    <dbReference type="NCBI Taxonomy" id="409438"/>
    <lineage>
        <taxon>Bacteria</taxon>
        <taxon>Pseudomonadati</taxon>
        <taxon>Pseudomonadota</taxon>
        <taxon>Gammaproteobacteria</taxon>
        <taxon>Enterobacterales</taxon>
        <taxon>Enterobacteriaceae</taxon>
        <taxon>Escherichia</taxon>
    </lineage>
</organism>
<protein>
    <recommendedName>
        <fullName evidence="2">Pimeloyl-[acyl-carrier protein] methyl ester esterase</fullName>
        <ecNumber evidence="2">3.1.1.85</ecNumber>
    </recommendedName>
    <alternativeName>
        <fullName evidence="2">Biotin synthesis protein BioH</fullName>
    </alternativeName>
    <alternativeName>
        <fullName evidence="2">Carboxylesterase BioH</fullName>
    </alternativeName>
</protein>
<keyword id="KW-0093">Biotin biosynthesis</keyword>
<keyword id="KW-0963">Cytoplasm</keyword>
<keyword id="KW-0378">Hydrolase</keyword>
<keyword id="KW-0719">Serine esterase</keyword>
<gene>
    <name evidence="2" type="primary">bioH</name>
    <name type="ordered locus">ECSE_3679</name>
</gene>
<name>BIOH_ECOSE</name>
<dbReference type="EC" id="3.1.1.85" evidence="2"/>
<dbReference type="EMBL" id="AP009240">
    <property type="protein sequence ID" value="BAG79203.1"/>
    <property type="molecule type" value="Genomic_DNA"/>
</dbReference>
<dbReference type="RefSeq" id="WP_001060071.1">
    <property type="nucleotide sequence ID" value="NC_011415.1"/>
</dbReference>
<dbReference type="SMR" id="B6I2X6"/>
<dbReference type="ESTHER" id="ecoli-bioh">
    <property type="family name" value="BioH"/>
</dbReference>
<dbReference type="MEROPS" id="S33.994"/>
<dbReference type="GeneID" id="75202255"/>
<dbReference type="KEGG" id="ecy:ECSE_3679"/>
<dbReference type="HOGENOM" id="CLU_020336_12_2_6"/>
<dbReference type="UniPathway" id="UPA00078"/>
<dbReference type="Proteomes" id="UP000008199">
    <property type="component" value="Chromosome"/>
</dbReference>
<dbReference type="GO" id="GO:0005737">
    <property type="term" value="C:cytoplasm"/>
    <property type="evidence" value="ECO:0007669"/>
    <property type="project" value="UniProtKB-SubCell"/>
</dbReference>
<dbReference type="GO" id="GO:0090499">
    <property type="term" value="F:pimelyl-[acyl-carrier protein] methyl ester esterase activity"/>
    <property type="evidence" value="ECO:0007669"/>
    <property type="project" value="UniProtKB-EC"/>
</dbReference>
<dbReference type="GO" id="GO:0009102">
    <property type="term" value="P:biotin biosynthetic process"/>
    <property type="evidence" value="ECO:0007669"/>
    <property type="project" value="UniProtKB-UniRule"/>
</dbReference>
<dbReference type="FunFam" id="3.40.50.1820:FF:000045">
    <property type="entry name" value="Pimeloyl-[acyl-carrier protein] methyl ester esterase"/>
    <property type="match status" value="1"/>
</dbReference>
<dbReference type="Gene3D" id="3.40.50.1820">
    <property type="entry name" value="alpha/beta hydrolase"/>
    <property type="match status" value="1"/>
</dbReference>
<dbReference type="HAMAP" id="MF_01260">
    <property type="entry name" value="Carboxylester"/>
    <property type="match status" value="1"/>
</dbReference>
<dbReference type="InterPro" id="IPR000073">
    <property type="entry name" value="AB_hydrolase_1"/>
</dbReference>
<dbReference type="InterPro" id="IPR029058">
    <property type="entry name" value="AB_hydrolase_fold"/>
</dbReference>
<dbReference type="InterPro" id="IPR010076">
    <property type="entry name" value="BioH"/>
</dbReference>
<dbReference type="InterPro" id="IPR050228">
    <property type="entry name" value="Carboxylesterase_BioH"/>
</dbReference>
<dbReference type="NCBIfam" id="TIGR01738">
    <property type="entry name" value="bioH"/>
    <property type="match status" value="1"/>
</dbReference>
<dbReference type="NCBIfam" id="NF007674">
    <property type="entry name" value="PRK10349.1"/>
    <property type="match status" value="1"/>
</dbReference>
<dbReference type="PANTHER" id="PTHR43194">
    <property type="entry name" value="HYDROLASE ALPHA/BETA FOLD FAMILY"/>
    <property type="match status" value="1"/>
</dbReference>
<dbReference type="PANTHER" id="PTHR43194:SF5">
    <property type="entry name" value="PIMELOYL-[ACYL-CARRIER PROTEIN] METHYL ESTER ESTERASE"/>
    <property type="match status" value="1"/>
</dbReference>
<dbReference type="Pfam" id="PF00561">
    <property type="entry name" value="Abhydrolase_1"/>
    <property type="match status" value="1"/>
</dbReference>
<dbReference type="SUPFAM" id="SSF53474">
    <property type="entry name" value="alpha/beta-Hydrolases"/>
    <property type="match status" value="1"/>
</dbReference>
<feature type="chain" id="PRO_1000139992" description="Pimeloyl-[acyl-carrier protein] methyl ester esterase">
    <location>
        <begin position="1"/>
        <end position="256"/>
    </location>
</feature>
<feature type="domain" description="AB hydrolase-1" evidence="1">
    <location>
        <begin position="15"/>
        <end position="242"/>
    </location>
</feature>
<feature type="active site" description="Nucleophile" evidence="2">
    <location>
        <position position="82"/>
    </location>
</feature>
<feature type="active site" evidence="2">
    <location>
        <position position="207"/>
    </location>
</feature>
<feature type="active site" evidence="2">
    <location>
        <position position="235"/>
    </location>
</feature>
<feature type="binding site" evidence="2">
    <location>
        <position position="22"/>
    </location>
    <ligand>
        <name>substrate</name>
    </ligand>
</feature>
<feature type="binding site" evidence="2">
    <location>
        <begin position="82"/>
        <end position="83"/>
    </location>
    <ligand>
        <name>substrate</name>
    </ligand>
</feature>
<feature type="binding site" evidence="2">
    <location>
        <begin position="143"/>
        <end position="147"/>
    </location>
    <ligand>
        <name>substrate</name>
    </ligand>
</feature>
<feature type="binding site" evidence="2">
    <location>
        <position position="235"/>
    </location>
    <ligand>
        <name>substrate</name>
    </ligand>
</feature>
<sequence>MNNIWWQTKGQGNVHLVLLHGWGLNAEVWRCIDEELSSHFTLHLVDLPGFGRSRGFGALSLADMAEAVLQQAPDKAIWLGWSLGGLVASQIALTHPERVQALVTVASSPCFSARDEWPGIKPDVLAGFQQQLSDDFQRTVERFLALQTMGTETARQDARALKKTVLALPMPEVDVLNGGLEILKTVDLRQPLQNVSMPFLRLYGYLDGLVPRKVVPMLDKLWPHSESYIFAKAAHAPFISHPVEFCHLLVALKQRV</sequence>
<accession>B6I2X6</accession>
<proteinExistence type="inferred from homology"/>
<reference key="1">
    <citation type="journal article" date="2008" name="DNA Res.">
        <title>Complete genome sequence and comparative analysis of the wild-type commensal Escherichia coli strain SE11 isolated from a healthy adult.</title>
        <authorList>
            <person name="Oshima K."/>
            <person name="Toh H."/>
            <person name="Ogura Y."/>
            <person name="Sasamoto H."/>
            <person name="Morita H."/>
            <person name="Park S.-H."/>
            <person name="Ooka T."/>
            <person name="Iyoda S."/>
            <person name="Taylor T.D."/>
            <person name="Hayashi T."/>
            <person name="Itoh K."/>
            <person name="Hattori M."/>
        </authorList>
    </citation>
    <scope>NUCLEOTIDE SEQUENCE [LARGE SCALE GENOMIC DNA]</scope>
    <source>
        <strain>SE11</strain>
    </source>
</reference>
<evidence type="ECO:0000255" key="1"/>
<evidence type="ECO:0000255" key="2">
    <source>
        <dbReference type="HAMAP-Rule" id="MF_01260"/>
    </source>
</evidence>
<comment type="function">
    <text evidence="2">The physiological role of BioH is to remove the methyl group introduced by BioC when the pimeloyl moiety is complete. It allows to synthesize pimeloyl-ACP via the fatty acid synthetic pathway through the hydrolysis of the ester bonds of pimeloyl-ACP esters.</text>
</comment>
<comment type="catalytic activity">
    <reaction evidence="2">
        <text>6-carboxyhexanoyl-[ACP] methyl ester + H2O = 6-carboxyhexanoyl-[ACP] + methanol + H(+)</text>
        <dbReference type="Rhea" id="RHEA:42700"/>
        <dbReference type="Rhea" id="RHEA-COMP:9955"/>
        <dbReference type="Rhea" id="RHEA-COMP:10186"/>
        <dbReference type="ChEBI" id="CHEBI:15377"/>
        <dbReference type="ChEBI" id="CHEBI:15378"/>
        <dbReference type="ChEBI" id="CHEBI:17790"/>
        <dbReference type="ChEBI" id="CHEBI:78846"/>
        <dbReference type="ChEBI" id="CHEBI:82735"/>
        <dbReference type="EC" id="3.1.1.85"/>
    </reaction>
</comment>
<comment type="pathway">
    <text evidence="2">Cofactor biosynthesis; biotin biosynthesis.</text>
</comment>
<comment type="subunit">
    <text evidence="2">Monomer.</text>
</comment>
<comment type="subcellular location">
    <subcellularLocation>
        <location evidence="2">Cytoplasm</location>
    </subcellularLocation>
</comment>
<comment type="similarity">
    <text evidence="2">Belongs to the AB hydrolase superfamily. Carboxylesterase BioH family.</text>
</comment>